<feature type="chain" id="PRO_0000283446" description="Putative F-box protein At3g22650">
    <location>
        <begin position="1"/>
        <end position="383"/>
    </location>
</feature>
<feature type="domain" description="F-box">
    <location>
        <begin position="3"/>
        <end position="50"/>
    </location>
</feature>
<accession>Q9LUJ6</accession>
<accession>F4J1L1</accession>
<comment type="sequence caution" evidence="1">
    <conflict type="erroneous gene model prediction">
        <sequence resource="EMBL-CDS" id="AEE76661"/>
    </conflict>
</comment>
<gene>
    <name type="ordered locus">At3g22650</name>
    <name type="ORF">MWI23.2</name>
</gene>
<proteinExistence type="predicted"/>
<organism>
    <name type="scientific">Arabidopsis thaliana</name>
    <name type="common">Mouse-ear cress</name>
    <dbReference type="NCBI Taxonomy" id="3702"/>
    <lineage>
        <taxon>Eukaryota</taxon>
        <taxon>Viridiplantae</taxon>
        <taxon>Streptophyta</taxon>
        <taxon>Embryophyta</taxon>
        <taxon>Tracheophyta</taxon>
        <taxon>Spermatophyta</taxon>
        <taxon>Magnoliopsida</taxon>
        <taxon>eudicotyledons</taxon>
        <taxon>Gunneridae</taxon>
        <taxon>Pentapetalae</taxon>
        <taxon>rosids</taxon>
        <taxon>malvids</taxon>
        <taxon>Brassicales</taxon>
        <taxon>Brassicaceae</taxon>
        <taxon>Camelineae</taxon>
        <taxon>Arabidopsis</taxon>
    </lineage>
</organism>
<name>FB176_ARATH</name>
<dbReference type="EMBL" id="AB022223">
    <property type="protein sequence ID" value="BAB01240.1"/>
    <property type="molecule type" value="Genomic_DNA"/>
</dbReference>
<dbReference type="EMBL" id="CP002686">
    <property type="protein sequence ID" value="AEE76661.1"/>
    <property type="status" value="ALT_SEQ"/>
    <property type="molecule type" value="Genomic_DNA"/>
</dbReference>
<dbReference type="EMBL" id="CP002686">
    <property type="protein sequence ID" value="ANM65462.1"/>
    <property type="molecule type" value="Genomic_DNA"/>
</dbReference>
<dbReference type="FunCoup" id="Q9LUJ6">
    <property type="interactions" value="2"/>
</dbReference>
<dbReference type="STRING" id="3702.Q9LUJ6"/>
<dbReference type="PaxDb" id="3702-AT3G22650.1"/>
<dbReference type="ProteomicsDB" id="230060"/>
<dbReference type="EnsemblPlants" id="AT3G22650.2">
    <property type="protein sequence ID" value="AT3G22650.2"/>
    <property type="gene ID" value="AT3G22650"/>
</dbReference>
<dbReference type="Gramene" id="AT3G22650.2">
    <property type="protein sequence ID" value="AT3G22650.2"/>
    <property type="gene ID" value="AT3G22650"/>
</dbReference>
<dbReference type="KEGG" id="ath:AT3G22650"/>
<dbReference type="Araport" id="AT3G22650"/>
<dbReference type="TAIR" id="AT3G22650">
    <property type="gene designation" value="CEG"/>
</dbReference>
<dbReference type="HOGENOM" id="CLU_034692_2_0_1"/>
<dbReference type="InParanoid" id="Q9LUJ6"/>
<dbReference type="OMA" id="IDPPCKG"/>
<dbReference type="PhylomeDB" id="Q9LUJ6"/>
<dbReference type="PRO" id="PR:Q9LUJ6"/>
<dbReference type="Proteomes" id="UP000006548">
    <property type="component" value="Chromosome 3"/>
</dbReference>
<dbReference type="ExpressionAtlas" id="Q9LUJ6">
    <property type="expression patterns" value="baseline and differential"/>
</dbReference>
<dbReference type="CDD" id="cd22157">
    <property type="entry name" value="F-box_AtFBW1-like"/>
    <property type="match status" value="1"/>
</dbReference>
<dbReference type="InterPro" id="IPR006527">
    <property type="entry name" value="F-box-assoc_dom_typ1"/>
</dbReference>
<dbReference type="InterPro" id="IPR017451">
    <property type="entry name" value="F-box-assoc_interact_dom"/>
</dbReference>
<dbReference type="InterPro" id="IPR036047">
    <property type="entry name" value="F-box-like_dom_sf"/>
</dbReference>
<dbReference type="InterPro" id="IPR001810">
    <property type="entry name" value="F-box_dom"/>
</dbReference>
<dbReference type="InterPro" id="IPR011043">
    <property type="entry name" value="Gal_Oxase/kelch_b-propeller"/>
</dbReference>
<dbReference type="InterPro" id="IPR050796">
    <property type="entry name" value="SCF_F-box_component"/>
</dbReference>
<dbReference type="NCBIfam" id="TIGR01640">
    <property type="entry name" value="F_box_assoc_1"/>
    <property type="match status" value="1"/>
</dbReference>
<dbReference type="PANTHER" id="PTHR31672">
    <property type="entry name" value="BNACNNG10540D PROTEIN"/>
    <property type="match status" value="1"/>
</dbReference>
<dbReference type="PANTHER" id="PTHR31672:SF13">
    <property type="entry name" value="F-BOX PROTEIN CPR30-LIKE"/>
    <property type="match status" value="1"/>
</dbReference>
<dbReference type="Pfam" id="PF00646">
    <property type="entry name" value="F-box"/>
    <property type="match status" value="1"/>
</dbReference>
<dbReference type="Pfam" id="PF07734">
    <property type="entry name" value="FBA_1"/>
    <property type="match status" value="1"/>
</dbReference>
<dbReference type="SMART" id="SM00256">
    <property type="entry name" value="FBOX"/>
    <property type="match status" value="1"/>
</dbReference>
<dbReference type="SUPFAM" id="SSF81383">
    <property type="entry name" value="F-box domain"/>
    <property type="match status" value="1"/>
</dbReference>
<dbReference type="SUPFAM" id="SSF50965">
    <property type="entry name" value="Galactose oxidase, central domain"/>
    <property type="match status" value="1"/>
</dbReference>
<reference key="1">
    <citation type="journal article" date="2000" name="DNA Res.">
        <title>Structural analysis of Arabidopsis thaliana chromosome 3. I. Sequence features of the regions of 4,504,864 bp covered by sixty P1 and TAC clones.</title>
        <authorList>
            <person name="Sato S."/>
            <person name="Nakamura Y."/>
            <person name="Kaneko T."/>
            <person name="Katoh T."/>
            <person name="Asamizu E."/>
            <person name="Tabata S."/>
        </authorList>
    </citation>
    <scope>NUCLEOTIDE SEQUENCE [LARGE SCALE GENOMIC DNA]</scope>
    <source>
        <strain>cv. Columbia</strain>
    </source>
</reference>
<reference key="2">
    <citation type="journal article" date="2017" name="Plant J.">
        <title>Araport11: a complete reannotation of the Arabidopsis thaliana reference genome.</title>
        <authorList>
            <person name="Cheng C.Y."/>
            <person name="Krishnakumar V."/>
            <person name="Chan A.P."/>
            <person name="Thibaud-Nissen F."/>
            <person name="Schobel S."/>
            <person name="Town C.D."/>
        </authorList>
    </citation>
    <scope>GENOME REANNOTATION</scope>
    <source>
        <strain>cv. Columbia</strain>
    </source>
</reference>
<keyword id="KW-1185">Reference proteome</keyword>
<sequence>MASCERSLLPIDIIEEICCRIPVEYLTQFKLTCKQWFALLKDKRFIYKYLDLFQEQERFIRIDRIVQIIDPVKGARSSSPIPQEFDNVAQISTMVHCDGLLLCRCKNERSRSYKLAVWNPFLSRVKWIEPMDFYSSNDFYGFGYDNVCRDEYKLLRIFDGEIEDESEIAGSYEPKIQIYDFKSDSWRIVDDTRLDWSIDPPCKGVSVKGNMYWIAHWNNRPEIFIQSFDFSTETFKIVCNLPFECNVLDTAALSSLRGDRLSLLHQSGETMKIEVWITNKLSDEVVSWTKYVDVTSPDLPTLHTDQHLTHPSYFIDKNDNIMVWCEQETEEETDDDVCVSVCMISKDGIVKKQIDAGRCDLCSDNRPFVCGYAYVPSLVPVPE</sequence>
<evidence type="ECO:0000305" key="1"/>
<protein>
    <recommendedName>
        <fullName>Putative F-box protein At3g22650</fullName>
    </recommendedName>
</protein>